<comment type="function">
    <molecule>Neuropeptide RFRP-1</molecule>
    <text evidence="1 3 6">Efficiently inhibits forskolin-induced production of cAMP. Acts as a potent negative regulator of gonadotropin synthesis and secretion (PubMed:11025660, PubMed:20027225). Induces secretion of prolactin (By similarity).</text>
</comment>
<comment type="function">
    <molecule>Neuropeptide NPVF</molecule>
    <text evidence="3 6">Efficiently inhibits forskolin-induced production of cAMP. Blocks morphine-induced analgesia.</text>
</comment>
<comment type="function">
    <molecule>Neuropeptide RFRP-2</molecule>
    <text evidence="3">Shows no inhibitory activity of forskolin-induced production of cAMP.</text>
</comment>
<comment type="interaction">
    <interactant intactId="EBI-1753111">
        <id>Q9HCQ7</id>
    </interactant>
    <interactant intactId="EBI-347996">
        <id>O43765</id>
        <label>SGTA</label>
    </interactant>
    <organismsDiffer>false</organismsDiffer>
    <experiments>3</experiments>
</comment>
<comment type="interaction">
    <interactant intactId="EBI-1753111">
        <id>Q9HCQ7</id>
    </interactant>
    <interactant intactId="EBI-947187">
        <id>Q9UHD9</id>
        <label>UBQLN2</label>
    </interactant>
    <organismsDiffer>false</organismsDiffer>
    <experiments>3</experiments>
</comment>
<comment type="subcellular location">
    <subcellularLocation>
        <location evidence="10">Secreted</location>
    </subcellularLocation>
</comment>
<comment type="alternative products">
    <event type="alternative splicing"/>
    <isoform>
        <id>Q9HCQ7-1</id>
        <name>1</name>
        <sequence type="displayed"/>
    </isoform>
    <isoform>
        <id>Q9HCQ7-2</id>
        <name>2</name>
        <sequence type="described" ref="VSP_039962"/>
    </isoform>
</comment>
<comment type="tissue specificity">
    <molecule>Isoform 1</molecule>
    <text evidence="4">Specifically expressed in the retina.</text>
</comment>
<comment type="tissue specificity">
    <molecule>Neuropeptide RFRP-1</molecule>
    <text evidence="6">Detected in the hypothalamus.</text>
</comment>
<comment type="tissue specificity">
    <molecule>Neuropeptide NPVF</molecule>
    <text evidence="6">Detected in the hypothalamus.</text>
</comment>
<comment type="mass spectrometry">
    <molecule>Neuropeptide RFRP-1</molecule>
</comment>
<comment type="mass spectrometry">
    <molecule>Neuropeptide NPVF</molecule>
</comment>
<comment type="similarity">
    <text evidence="9">Belongs to the FARP (FMRFamide related peptide) family.</text>
</comment>
<organism>
    <name type="scientific">Homo sapiens</name>
    <name type="common">Human</name>
    <dbReference type="NCBI Taxonomy" id="9606"/>
    <lineage>
        <taxon>Eukaryota</taxon>
        <taxon>Metazoa</taxon>
        <taxon>Chordata</taxon>
        <taxon>Craniata</taxon>
        <taxon>Vertebrata</taxon>
        <taxon>Euteleostomi</taxon>
        <taxon>Mammalia</taxon>
        <taxon>Eutheria</taxon>
        <taxon>Euarchontoglires</taxon>
        <taxon>Primates</taxon>
        <taxon>Haplorrhini</taxon>
        <taxon>Catarrhini</taxon>
        <taxon>Hominidae</taxon>
        <taxon>Homo</taxon>
    </lineage>
</organism>
<feature type="signal peptide" evidence="2">
    <location>
        <begin position="1"/>
        <end position="26"/>
    </location>
</feature>
<feature type="propeptide" id="PRO_0000009920">
    <location>
        <begin position="27"/>
        <end position="55"/>
    </location>
</feature>
<feature type="peptide" id="PRO_0000009921" description="Neuropeptide NPSF" evidence="2">
    <location>
        <begin position="56"/>
        <end position="92"/>
    </location>
</feature>
<feature type="peptide" id="PRO_0000401171" description="Neuropeptide RFRP-1" evidence="3">
    <location>
        <begin position="81"/>
        <end position="92"/>
    </location>
</feature>
<feature type="propeptide" id="PRO_0000009922">
    <location>
        <begin position="95"/>
        <end position="99"/>
    </location>
</feature>
<feature type="peptide" id="PRO_0000009923" description="Neuropeptide RFRP-2" evidence="3">
    <location>
        <begin position="101"/>
        <end position="112"/>
    </location>
</feature>
<feature type="propeptide" id="PRO_0000009924">
    <location>
        <begin position="115"/>
        <end position="121"/>
    </location>
</feature>
<feature type="peptide" id="PRO_0000009925" description="Neuropeptide NPVF" evidence="3">
    <location>
        <begin position="124"/>
        <end position="131"/>
    </location>
</feature>
<feature type="propeptide" id="PRO_0000009926">
    <location>
        <begin position="134"/>
        <end position="196"/>
    </location>
</feature>
<feature type="modified residue" description="Phenylalanine amide" evidence="6">
    <location>
        <position position="92"/>
    </location>
</feature>
<feature type="modified residue" description="Phenylalanine amide" evidence="6">
    <location>
        <position position="131"/>
    </location>
</feature>
<feature type="splice variant" id="VSP_039962" description="In isoform 2." evidence="8">
    <location>
        <begin position="181"/>
        <end position="196"/>
    </location>
</feature>
<feature type="sequence variant" id="VAR_014073" description="In dbSNP:rs886354." evidence="5">
    <original>M</original>
    <variation>I</variation>
    <location>
        <position position="32"/>
    </location>
</feature>
<feature type="sequence variant" id="VAR_014074" description="In dbSNP:rs877834." evidence="4">
    <original>D</original>
    <variation>G</variation>
    <location>
        <position position="42"/>
    </location>
</feature>
<feature type="sequence variant" id="VAR_030644" description="In dbSNP:rs3213641.">
    <original>V</original>
    <variation>M</variation>
    <location>
        <position position="121"/>
    </location>
</feature>
<gene>
    <name evidence="11" type="primary">NPVF</name>
    <name type="synonym">C7orf9</name>
    <name type="synonym">RFRP</name>
</gene>
<proteinExistence type="evidence at protein level"/>
<name>NPVF_HUMAN</name>
<evidence type="ECO:0000250" key="1">
    <source>
        <dbReference type="UniProtKB" id="Q9ESQ9"/>
    </source>
</evidence>
<evidence type="ECO:0000255" key="2"/>
<evidence type="ECO:0000269" key="3">
    <source>
    </source>
</evidence>
<evidence type="ECO:0000269" key="4">
    <source>
    </source>
</evidence>
<evidence type="ECO:0000269" key="5">
    <source>
    </source>
</evidence>
<evidence type="ECO:0000269" key="6">
    <source>
    </source>
</evidence>
<evidence type="ECO:0000303" key="7">
    <source>
    </source>
</evidence>
<evidence type="ECO:0000303" key="8">
    <source>
    </source>
</evidence>
<evidence type="ECO:0000305" key="9"/>
<evidence type="ECO:0000305" key="10">
    <source>
    </source>
</evidence>
<evidence type="ECO:0000312" key="11">
    <source>
        <dbReference type="HGNC" id="HGNC:13782"/>
    </source>
</evidence>
<keyword id="KW-0025">Alternative splicing</keyword>
<keyword id="KW-0027">Amidation</keyword>
<keyword id="KW-0165">Cleavage on pair of basic residues</keyword>
<keyword id="KW-0903">Direct protein sequencing</keyword>
<keyword id="KW-0527">Neuropeptide</keyword>
<keyword id="KW-1267">Proteomics identification</keyword>
<keyword id="KW-1185">Reference proteome</keyword>
<keyword id="KW-0964">Secreted</keyword>
<keyword id="KW-0732">Signal</keyword>
<dbReference type="EMBL" id="AB040290">
    <property type="protein sequence ID" value="BAB17674.1"/>
    <property type="molecule type" value="mRNA"/>
</dbReference>
<dbReference type="EMBL" id="AF330057">
    <property type="protein sequence ID" value="AAK94201.1"/>
    <property type="molecule type" value="mRNA"/>
</dbReference>
<dbReference type="EMBL" id="AF440392">
    <property type="protein sequence ID" value="AAL90453.1"/>
    <property type="molecule type" value="mRNA"/>
</dbReference>
<dbReference type="EMBL" id="AF440395">
    <property type="protein sequence ID" value="AAL90458.1"/>
    <property type="molecule type" value="Genomic_DNA"/>
</dbReference>
<dbReference type="EMBL" id="AF440393">
    <property type="protein sequence ID" value="AAL90458.1"/>
    <property type="status" value="JOINED"/>
    <property type="molecule type" value="Genomic_DNA"/>
</dbReference>
<dbReference type="EMBL" id="AF440394">
    <property type="protein sequence ID" value="AAL90458.1"/>
    <property type="status" value="JOINED"/>
    <property type="molecule type" value="Genomic_DNA"/>
</dbReference>
<dbReference type="EMBL" id="AC004129">
    <property type="protein sequence ID" value="AAP22339.1"/>
    <property type="molecule type" value="Genomic_DNA"/>
</dbReference>
<dbReference type="EMBL" id="CH236948">
    <property type="protein sequence ID" value="EAL24237.1"/>
    <property type="molecule type" value="Genomic_DNA"/>
</dbReference>
<dbReference type="EMBL" id="CH471073">
    <property type="protein sequence ID" value="EAW93830.1"/>
    <property type="molecule type" value="Genomic_DNA"/>
</dbReference>
<dbReference type="CCDS" id="CCDS5395.1">
    <molecule id="Q9HCQ7-1"/>
</dbReference>
<dbReference type="RefSeq" id="NP_071433.3">
    <molecule id="Q9HCQ7-1"/>
    <property type="nucleotide sequence ID" value="NM_022150.3"/>
</dbReference>
<dbReference type="BioGRID" id="122068">
    <property type="interactions" value="17"/>
</dbReference>
<dbReference type="FunCoup" id="Q9HCQ7">
    <property type="interactions" value="366"/>
</dbReference>
<dbReference type="IntAct" id="Q9HCQ7">
    <property type="interactions" value="6"/>
</dbReference>
<dbReference type="STRING" id="9606.ENSP00000222674"/>
<dbReference type="iPTMnet" id="Q9HCQ7"/>
<dbReference type="PhosphoSitePlus" id="Q9HCQ7"/>
<dbReference type="BioMuta" id="NPVF"/>
<dbReference type="DMDM" id="311033508"/>
<dbReference type="MassIVE" id="Q9HCQ7"/>
<dbReference type="PaxDb" id="9606-ENSP00000222674"/>
<dbReference type="PeptideAtlas" id="Q9HCQ7"/>
<dbReference type="ProteomicsDB" id="81787">
    <molecule id="Q9HCQ7-1"/>
</dbReference>
<dbReference type="ProteomicsDB" id="81788">
    <molecule id="Q9HCQ7-2"/>
</dbReference>
<dbReference type="Antibodypedia" id="50012">
    <property type="antibodies" value="25 antibodies from 8 providers"/>
</dbReference>
<dbReference type="DNASU" id="64111"/>
<dbReference type="Ensembl" id="ENST00000222674.2">
    <molecule id="Q9HCQ7-1"/>
    <property type="protein sequence ID" value="ENSP00000222674.2"/>
    <property type="gene ID" value="ENSG00000105954.2"/>
</dbReference>
<dbReference type="GeneID" id="64111"/>
<dbReference type="KEGG" id="hsa:64111"/>
<dbReference type="MANE-Select" id="ENST00000222674.2">
    <property type="protein sequence ID" value="ENSP00000222674.2"/>
    <property type="RefSeq nucleotide sequence ID" value="NM_022150.3"/>
    <property type="RefSeq protein sequence ID" value="NP_071433.3"/>
</dbReference>
<dbReference type="UCSC" id="uc003sxo.4">
    <molecule id="Q9HCQ7-1"/>
    <property type="organism name" value="human"/>
</dbReference>
<dbReference type="AGR" id="HGNC:13782"/>
<dbReference type="CTD" id="64111"/>
<dbReference type="DisGeNET" id="64111"/>
<dbReference type="GeneCards" id="NPVF"/>
<dbReference type="HGNC" id="HGNC:13782">
    <property type="gene designation" value="NPVF"/>
</dbReference>
<dbReference type="HPA" id="ENSG00000105954">
    <property type="expression patterns" value="Tissue enriched (retina)"/>
</dbReference>
<dbReference type="MIM" id="616984">
    <property type="type" value="gene"/>
</dbReference>
<dbReference type="neXtProt" id="NX_Q9HCQ7"/>
<dbReference type="OpenTargets" id="ENSG00000105954"/>
<dbReference type="PharmGKB" id="PA162398161"/>
<dbReference type="VEuPathDB" id="HostDB:ENSG00000105954"/>
<dbReference type="eggNOG" id="ENOG502S5H9">
    <property type="taxonomic scope" value="Eukaryota"/>
</dbReference>
<dbReference type="GeneTree" id="ENSGT00390000003271"/>
<dbReference type="HOGENOM" id="CLU_120051_0_0_1"/>
<dbReference type="InParanoid" id="Q9HCQ7"/>
<dbReference type="OMA" id="KMPHSVA"/>
<dbReference type="OrthoDB" id="8834619at2759"/>
<dbReference type="PAN-GO" id="Q9HCQ7">
    <property type="GO annotations" value="3 GO annotations based on evolutionary models"/>
</dbReference>
<dbReference type="PhylomeDB" id="Q9HCQ7"/>
<dbReference type="TreeFam" id="TF330935"/>
<dbReference type="PathwayCommons" id="Q9HCQ7"/>
<dbReference type="SignaLink" id="Q9HCQ7"/>
<dbReference type="BioGRID-ORCS" id="64111">
    <property type="hits" value="14 hits in 1129 CRISPR screens"/>
</dbReference>
<dbReference type="GenomeRNAi" id="64111"/>
<dbReference type="Pharos" id="Q9HCQ7">
    <property type="development level" value="Tdark"/>
</dbReference>
<dbReference type="PRO" id="PR:Q9HCQ7"/>
<dbReference type="Proteomes" id="UP000005640">
    <property type="component" value="Chromosome 7"/>
</dbReference>
<dbReference type="RNAct" id="Q9HCQ7">
    <property type="molecule type" value="protein"/>
</dbReference>
<dbReference type="Bgee" id="ENSG00000105954">
    <property type="expression patterns" value="Expressed in hypothalamus and 11 other cell types or tissues"/>
</dbReference>
<dbReference type="GO" id="GO:0005615">
    <property type="term" value="C:extracellular space"/>
    <property type="evidence" value="ECO:0000314"/>
    <property type="project" value="UniProt"/>
</dbReference>
<dbReference type="GO" id="GO:0160041">
    <property type="term" value="F:neuropeptide activity"/>
    <property type="evidence" value="ECO:0000314"/>
    <property type="project" value="UniProt"/>
</dbReference>
<dbReference type="GO" id="GO:0005102">
    <property type="term" value="F:signaling receptor binding"/>
    <property type="evidence" value="ECO:0000318"/>
    <property type="project" value="GO_Central"/>
</dbReference>
<dbReference type="GO" id="GO:0032277">
    <property type="term" value="P:negative regulation of gonadotropin secretion"/>
    <property type="evidence" value="ECO:0000314"/>
    <property type="project" value="UniProtKB"/>
</dbReference>
<dbReference type="GO" id="GO:0007218">
    <property type="term" value="P:neuropeptide signaling pathway"/>
    <property type="evidence" value="ECO:0000314"/>
    <property type="project" value="UniProt"/>
</dbReference>
<dbReference type="InterPro" id="IPR026297">
    <property type="entry name" value="FMRFamide-related/fGRP"/>
</dbReference>
<dbReference type="PANTHER" id="PTHR14403:SF6">
    <property type="entry name" value="PRO-FMRFAMIDE-RELATED NEUROPEPTIDE VF"/>
    <property type="match status" value="1"/>
</dbReference>
<dbReference type="PANTHER" id="PTHR14403">
    <property type="entry name" value="RFAMIDE PEPTIDE GONADOTROPIN INHIBITORY HORMONE"/>
    <property type="match status" value="1"/>
</dbReference>
<protein>
    <recommendedName>
        <fullName>Pro-FMRFamide-related neuropeptide VF</fullName>
    </recommendedName>
    <component>
        <recommendedName>
            <fullName>Neuropeptide NPSF</fullName>
        </recommendedName>
    </component>
    <component>
        <recommendedName>
            <fullName evidence="7">Neuropeptide RFRP-1</fullName>
        </recommendedName>
    </component>
    <component>
        <recommendedName>
            <fullName evidence="7">Neuropeptide RFRP-2</fullName>
        </recommendedName>
    </component>
    <component>
        <recommendedName>
            <fullName>Neuropeptide NPVF</fullName>
        </recommendedName>
        <alternativeName>
            <fullName evidence="7">Neuropeptide RFRP-3</fullName>
        </alternativeName>
    </component>
</protein>
<accession>Q9HCQ7</accession>
<accession>A4D164</accession>
<accession>Q7LE27</accession>
<accession>Q96PI9</accession>
<sequence>MEIISSKLFILLTLATSSLLTSNIFCADELVMSNLHSKENYDKYSEPRGYPKGERSLNFEELKDWGPKNVIKMSTPAVNKMPHSFANLPLRFGRNVQEERSAGATANLPLRSGRNMEVSLVRRVPNLPQRFGRTTTAKSVCRMLSDLCQGSMHSPCANDLFYSMTCQHQEIQNPDQKQSRRLLFKKIDDAELKQEK</sequence>
<reference key="1">
    <citation type="journal article" date="2000" name="Nat. Cell Biol.">
        <title>New neuropeptides containing carboxy-terminal RFamide and their receptor in mammals.</title>
        <authorList>
            <person name="Hinuma S."/>
            <person name="Shintani Y."/>
            <person name="Fukusumi S."/>
            <person name="Iijima N."/>
            <person name="Matsumoto Y."/>
            <person name="Hosoya M."/>
            <person name="Fujii R."/>
            <person name="Watanabe T."/>
            <person name="Kikuchi K."/>
            <person name="Terao Y."/>
            <person name="Yano T."/>
            <person name="Yamamoto T."/>
            <person name="Kawamata Y."/>
            <person name="Habata Y."/>
            <person name="Asada M."/>
            <person name="Kitada C."/>
            <person name="Kurokawa T."/>
            <person name="Onda H."/>
            <person name="Nishimura O."/>
            <person name="Tanaka M."/>
            <person name="Ibata Y."/>
            <person name="Fujino M."/>
        </authorList>
    </citation>
    <scope>NUCLEOTIDE SEQUENCE [MRNA] (ISOFORM 1)</scope>
    <scope>SYNTHESIS OF RFRP-1; RFRP-2 AND NPVF</scope>
    <scope>FUNCTION</scope>
    <source>
        <tissue>Fetal brain</tissue>
    </source>
</reference>
<reference key="2">
    <citation type="journal article" date="2001" name="J. Biol. Chem.">
        <title>Identification and characterization of novel mammalian neuropeptide FF-like peptides that attenuate morphine-induced antinociception.</title>
        <authorList>
            <person name="Liu Q."/>
            <person name="Guan X.-M."/>
            <person name="Martin W.J."/>
            <person name="McDonald T.P."/>
            <person name="Clements M.K."/>
            <person name="Jiang Q."/>
            <person name="Zeng Z."/>
            <person name="Jacobson M."/>
            <person name="Williams D.L. Jr."/>
            <person name="Yu H."/>
            <person name="Bomford D."/>
            <person name="Figueroa D."/>
            <person name="Mallee J."/>
            <person name="Wang R."/>
            <person name="Evans J."/>
            <person name="Gould R."/>
            <person name="Austin C.P."/>
        </authorList>
    </citation>
    <scope>NUCLEOTIDE SEQUENCE [MRNA] (ISOFORM 2)</scope>
</reference>
<reference key="3">
    <citation type="journal article" date="2002" name="Mol. Vis.">
        <title>Genomic structure and assessment of the retinally expressed RFamide-related peptide gene in dominant cystoid macular dystrophy.</title>
        <authorList>
            <person name="Schulz H.L."/>
            <person name="Stoehr H."/>
            <person name="White K."/>
            <person name="van Driel M.A."/>
            <person name="Hoyng C.B."/>
            <person name="Cremers F."/>
            <person name="Weber B.H.F."/>
        </authorList>
    </citation>
    <scope>NUCLEOTIDE SEQUENCE [GENOMIC DNA / MRNA] (ISOFORM 1)</scope>
    <scope>TISSUE SPECIFICITY</scope>
    <scope>VARIANT GLY-42</scope>
    <source>
        <tissue>Retina</tissue>
    </source>
</reference>
<reference key="4">
    <citation type="journal article" date="2003" name="Nature">
        <title>The DNA sequence of human chromosome 7.</title>
        <authorList>
            <person name="Hillier L.W."/>
            <person name="Fulton R.S."/>
            <person name="Fulton L.A."/>
            <person name="Graves T.A."/>
            <person name="Pepin K.H."/>
            <person name="Wagner-McPherson C."/>
            <person name="Layman D."/>
            <person name="Maas J."/>
            <person name="Jaeger S."/>
            <person name="Walker R."/>
            <person name="Wylie K."/>
            <person name="Sekhon M."/>
            <person name="Becker M.C."/>
            <person name="O'Laughlin M.D."/>
            <person name="Schaller M.E."/>
            <person name="Fewell G.A."/>
            <person name="Delehaunty K.D."/>
            <person name="Miner T.L."/>
            <person name="Nash W.E."/>
            <person name="Cordes M."/>
            <person name="Du H."/>
            <person name="Sun H."/>
            <person name="Edwards J."/>
            <person name="Bradshaw-Cordum H."/>
            <person name="Ali J."/>
            <person name="Andrews S."/>
            <person name="Isak A."/>
            <person name="Vanbrunt A."/>
            <person name="Nguyen C."/>
            <person name="Du F."/>
            <person name="Lamar B."/>
            <person name="Courtney L."/>
            <person name="Kalicki J."/>
            <person name="Ozersky P."/>
            <person name="Bielicki L."/>
            <person name="Scott K."/>
            <person name="Holmes A."/>
            <person name="Harkins R."/>
            <person name="Harris A."/>
            <person name="Strong C.M."/>
            <person name="Hou S."/>
            <person name="Tomlinson C."/>
            <person name="Dauphin-Kohlberg S."/>
            <person name="Kozlowicz-Reilly A."/>
            <person name="Leonard S."/>
            <person name="Rohlfing T."/>
            <person name="Rock S.M."/>
            <person name="Tin-Wollam A.-M."/>
            <person name="Abbott A."/>
            <person name="Minx P."/>
            <person name="Maupin R."/>
            <person name="Strowmatt C."/>
            <person name="Latreille P."/>
            <person name="Miller N."/>
            <person name="Johnson D."/>
            <person name="Murray J."/>
            <person name="Woessner J.P."/>
            <person name="Wendl M.C."/>
            <person name="Yang S.-P."/>
            <person name="Schultz B.R."/>
            <person name="Wallis J.W."/>
            <person name="Spieth J."/>
            <person name="Bieri T.A."/>
            <person name="Nelson J.O."/>
            <person name="Berkowicz N."/>
            <person name="Wohldmann P.E."/>
            <person name="Cook L.L."/>
            <person name="Hickenbotham M.T."/>
            <person name="Eldred J."/>
            <person name="Williams D."/>
            <person name="Bedell J.A."/>
            <person name="Mardis E.R."/>
            <person name="Clifton S.W."/>
            <person name="Chissoe S.L."/>
            <person name="Marra M.A."/>
            <person name="Raymond C."/>
            <person name="Haugen E."/>
            <person name="Gillett W."/>
            <person name="Zhou Y."/>
            <person name="James R."/>
            <person name="Phelps K."/>
            <person name="Iadanoto S."/>
            <person name="Bubb K."/>
            <person name="Simms E."/>
            <person name="Levy R."/>
            <person name="Clendenning J."/>
            <person name="Kaul R."/>
            <person name="Kent W.J."/>
            <person name="Furey T.S."/>
            <person name="Baertsch R.A."/>
            <person name="Brent M.R."/>
            <person name="Keibler E."/>
            <person name="Flicek P."/>
            <person name="Bork P."/>
            <person name="Suyama M."/>
            <person name="Bailey J.A."/>
            <person name="Portnoy M.E."/>
            <person name="Torrents D."/>
            <person name="Chinwalla A.T."/>
            <person name="Gish W.R."/>
            <person name="Eddy S.R."/>
            <person name="McPherson J.D."/>
            <person name="Olson M.V."/>
            <person name="Eichler E.E."/>
            <person name="Green E.D."/>
            <person name="Waterston R.H."/>
            <person name="Wilson R.K."/>
        </authorList>
    </citation>
    <scope>NUCLEOTIDE SEQUENCE [LARGE SCALE GENOMIC DNA]</scope>
    <scope>VARIANT ILE-32</scope>
</reference>
<reference key="5">
    <citation type="journal article" date="2003" name="Science">
        <title>Human chromosome 7: DNA sequence and biology.</title>
        <authorList>
            <person name="Scherer S.W."/>
            <person name="Cheung J."/>
            <person name="MacDonald J.R."/>
            <person name="Osborne L.R."/>
            <person name="Nakabayashi K."/>
            <person name="Herbrick J.-A."/>
            <person name="Carson A.R."/>
            <person name="Parker-Katiraee L."/>
            <person name="Skaug J."/>
            <person name="Khaja R."/>
            <person name="Zhang J."/>
            <person name="Hudek A.K."/>
            <person name="Li M."/>
            <person name="Haddad M."/>
            <person name="Duggan G.E."/>
            <person name="Fernandez B.A."/>
            <person name="Kanematsu E."/>
            <person name="Gentles S."/>
            <person name="Christopoulos C.C."/>
            <person name="Choufani S."/>
            <person name="Kwasnicka D."/>
            <person name="Zheng X.H."/>
            <person name="Lai Z."/>
            <person name="Nusskern D.R."/>
            <person name="Zhang Q."/>
            <person name="Gu Z."/>
            <person name="Lu F."/>
            <person name="Zeesman S."/>
            <person name="Nowaczyk M.J."/>
            <person name="Teshima I."/>
            <person name="Chitayat D."/>
            <person name="Shuman C."/>
            <person name="Weksberg R."/>
            <person name="Zackai E.H."/>
            <person name="Grebe T.A."/>
            <person name="Cox S.R."/>
            <person name="Kirkpatrick S.J."/>
            <person name="Rahman N."/>
            <person name="Friedman J.M."/>
            <person name="Heng H.H.Q."/>
            <person name="Pelicci P.G."/>
            <person name="Lo-Coco F."/>
            <person name="Belloni E."/>
            <person name="Shaffer L.G."/>
            <person name="Pober B."/>
            <person name="Morton C.C."/>
            <person name="Gusella J.F."/>
            <person name="Bruns G.A.P."/>
            <person name="Korf B.R."/>
            <person name="Quade B.J."/>
            <person name="Ligon A.H."/>
            <person name="Ferguson H."/>
            <person name="Higgins A.W."/>
            <person name="Leach N.T."/>
            <person name="Herrick S.R."/>
            <person name="Lemyre E."/>
            <person name="Farra C.G."/>
            <person name="Kim H.-G."/>
            <person name="Summers A.M."/>
            <person name="Gripp K.W."/>
            <person name="Roberts W."/>
            <person name="Szatmari P."/>
            <person name="Winsor E.J.T."/>
            <person name="Grzeschik K.-H."/>
            <person name="Teebi A."/>
            <person name="Minassian B.A."/>
            <person name="Kere J."/>
            <person name="Armengol L."/>
            <person name="Pujana M.A."/>
            <person name="Estivill X."/>
            <person name="Wilson M.D."/>
            <person name="Koop B.F."/>
            <person name="Tosi S."/>
            <person name="Moore G.E."/>
            <person name="Boright A.P."/>
            <person name="Zlotorynski E."/>
            <person name="Kerem B."/>
            <person name="Kroisel P.M."/>
            <person name="Petek E."/>
            <person name="Oscier D.G."/>
            <person name="Mould S.J."/>
            <person name="Doehner H."/>
            <person name="Doehner K."/>
            <person name="Rommens J.M."/>
            <person name="Vincent J.B."/>
            <person name="Venter J.C."/>
            <person name="Li P.W."/>
            <person name="Mural R.J."/>
            <person name="Adams M.D."/>
            <person name="Tsui L.-C."/>
        </authorList>
    </citation>
    <scope>NUCLEOTIDE SEQUENCE [LARGE SCALE GENOMIC DNA]</scope>
</reference>
<reference key="6">
    <citation type="submission" date="2005-07" db="EMBL/GenBank/DDBJ databases">
        <authorList>
            <person name="Mural R.J."/>
            <person name="Istrail S."/>
            <person name="Sutton G.G."/>
            <person name="Florea L."/>
            <person name="Halpern A.L."/>
            <person name="Mobarry C.M."/>
            <person name="Lippert R."/>
            <person name="Walenz B."/>
            <person name="Shatkay H."/>
            <person name="Dew I."/>
            <person name="Miller J.R."/>
            <person name="Flanigan M.J."/>
            <person name="Edwards N.J."/>
            <person name="Bolanos R."/>
            <person name="Fasulo D."/>
            <person name="Halldorsson B.V."/>
            <person name="Hannenhalli S."/>
            <person name="Turner R."/>
            <person name="Yooseph S."/>
            <person name="Lu F."/>
            <person name="Nusskern D.R."/>
            <person name="Shue B.C."/>
            <person name="Zheng X.H."/>
            <person name="Zhong F."/>
            <person name="Delcher A.L."/>
            <person name="Huson D.H."/>
            <person name="Kravitz S.A."/>
            <person name="Mouchard L."/>
            <person name="Reinert K."/>
            <person name="Remington K.A."/>
            <person name="Clark A.G."/>
            <person name="Waterman M.S."/>
            <person name="Eichler E.E."/>
            <person name="Adams M.D."/>
            <person name="Hunkapiller M.W."/>
            <person name="Myers E.W."/>
            <person name="Venter J.C."/>
        </authorList>
    </citation>
    <scope>NUCLEOTIDE SEQUENCE [LARGE SCALE GENOMIC DNA]</scope>
</reference>
<reference key="7">
    <citation type="journal article" date="2009" name="PLoS ONE">
        <title>Identification of human GnIH homologs, RFRP-1 and RFRP-3, and the cognate receptor, GPR147 in the human hypothalamic pituitary axis.</title>
        <authorList>
            <person name="Ubuka T."/>
            <person name="Morgan K."/>
            <person name="Pawson A.J."/>
            <person name="Osugi T."/>
            <person name="Chowdhury V.S."/>
            <person name="Minakata H."/>
            <person name="Tsutsui K."/>
            <person name="Millar R.P."/>
            <person name="Bentley G.E."/>
        </authorList>
    </citation>
    <scope>PROTEIN SEQUENCE OF 81-92 AND 124-131</scope>
    <scope>AMIDATION AT PHE-92 AND PHE-131</scope>
    <scope>FUNCTION</scope>
    <scope>TISSUE SPECIFICITY</scope>
    <scope>MASS SPECTROMETRY</scope>
</reference>